<reference key="1">
    <citation type="journal article" date="2003" name="Microbiology">
        <title>The complete genome sequence of the avian pathogen Mycoplasma gallisepticum strain R(low).</title>
        <authorList>
            <person name="Papazisi L."/>
            <person name="Gorton T.S."/>
            <person name="Kutish G."/>
            <person name="Markham P.F."/>
            <person name="Browning G.F."/>
            <person name="Nguyen D.K."/>
            <person name="Swartzell S."/>
            <person name="Madan A."/>
            <person name="Mahairas G."/>
            <person name="Geary S.J."/>
        </authorList>
    </citation>
    <scope>NUCLEOTIDE SEQUENCE [LARGE SCALE GENOMIC DNA]</scope>
    <source>
        <strain>R(low / passage 15 / clone 2)</strain>
    </source>
</reference>
<dbReference type="EMBL" id="AE015450">
    <property type="protein sequence ID" value="AAP56861.1"/>
    <property type="molecule type" value="Genomic_DNA"/>
</dbReference>
<dbReference type="RefSeq" id="WP_011113760.1">
    <property type="nucleotide sequence ID" value="NC_004829.2"/>
</dbReference>
<dbReference type="SMR" id="Q7NAX4"/>
<dbReference type="GeneID" id="93510342"/>
<dbReference type="KEGG" id="mga:MGA_0216"/>
<dbReference type="PATRIC" id="fig|233150.7.peg.570"/>
<dbReference type="HOGENOM" id="CLU_074944_2_1_14"/>
<dbReference type="OrthoDB" id="9801844at2"/>
<dbReference type="UniPathway" id="UPA00345"/>
<dbReference type="Proteomes" id="UP000001418">
    <property type="component" value="Chromosome"/>
</dbReference>
<dbReference type="GO" id="GO:0005737">
    <property type="term" value="C:cytoplasm"/>
    <property type="evidence" value="ECO:0007669"/>
    <property type="project" value="UniProtKB-SubCell"/>
</dbReference>
<dbReference type="GO" id="GO:0003746">
    <property type="term" value="F:translation elongation factor activity"/>
    <property type="evidence" value="ECO:0007669"/>
    <property type="project" value="UniProtKB-UniRule"/>
</dbReference>
<dbReference type="GO" id="GO:0043043">
    <property type="term" value="P:peptide biosynthetic process"/>
    <property type="evidence" value="ECO:0007669"/>
    <property type="project" value="InterPro"/>
</dbReference>
<dbReference type="CDD" id="cd04470">
    <property type="entry name" value="S1_EF-P_repeat_1"/>
    <property type="match status" value="1"/>
</dbReference>
<dbReference type="FunFam" id="2.40.50.140:FF:000004">
    <property type="entry name" value="Elongation factor P"/>
    <property type="match status" value="1"/>
</dbReference>
<dbReference type="FunFam" id="2.40.50.140:FF:000009">
    <property type="entry name" value="Elongation factor P"/>
    <property type="match status" value="1"/>
</dbReference>
<dbReference type="Gene3D" id="2.30.30.30">
    <property type="match status" value="1"/>
</dbReference>
<dbReference type="Gene3D" id="2.40.50.140">
    <property type="entry name" value="Nucleic acid-binding proteins"/>
    <property type="match status" value="2"/>
</dbReference>
<dbReference type="HAMAP" id="MF_00141">
    <property type="entry name" value="EF_P"/>
    <property type="match status" value="1"/>
</dbReference>
<dbReference type="InterPro" id="IPR015365">
    <property type="entry name" value="Elong-fact-P_C"/>
</dbReference>
<dbReference type="InterPro" id="IPR012340">
    <property type="entry name" value="NA-bd_OB-fold"/>
</dbReference>
<dbReference type="InterPro" id="IPR014722">
    <property type="entry name" value="Rib_uL2_dom2"/>
</dbReference>
<dbReference type="InterPro" id="IPR020599">
    <property type="entry name" value="Transl_elong_fac_P/YeiP"/>
</dbReference>
<dbReference type="InterPro" id="IPR013185">
    <property type="entry name" value="Transl_elong_KOW-like"/>
</dbReference>
<dbReference type="InterPro" id="IPR001059">
    <property type="entry name" value="Transl_elong_P/YeiP_cen"/>
</dbReference>
<dbReference type="InterPro" id="IPR011768">
    <property type="entry name" value="Transl_elongation_fac_P"/>
</dbReference>
<dbReference type="InterPro" id="IPR008991">
    <property type="entry name" value="Translation_prot_SH3-like_sf"/>
</dbReference>
<dbReference type="NCBIfam" id="TIGR00038">
    <property type="entry name" value="efp"/>
    <property type="match status" value="1"/>
</dbReference>
<dbReference type="NCBIfam" id="NF001810">
    <property type="entry name" value="PRK00529.1"/>
    <property type="match status" value="1"/>
</dbReference>
<dbReference type="PANTHER" id="PTHR30053">
    <property type="entry name" value="ELONGATION FACTOR P"/>
    <property type="match status" value="1"/>
</dbReference>
<dbReference type="PANTHER" id="PTHR30053:SF12">
    <property type="entry name" value="ELONGATION FACTOR P (EF-P) FAMILY PROTEIN"/>
    <property type="match status" value="1"/>
</dbReference>
<dbReference type="Pfam" id="PF01132">
    <property type="entry name" value="EFP"/>
    <property type="match status" value="1"/>
</dbReference>
<dbReference type="Pfam" id="PF08207">
    <property type="entry name" value="EFP_N"/>
    <property type="match status" value="1"/>
</dbReference>
<dbReference type="Pfam" id="PF09285">
    <property type="entry name" value="Elong-fact-P_C"/>
    <property type="match status" value="1"/>
</dbReference>
<dbReference type="PIRSF" id="PIRSF005901">
    <property type="entry name" value="EF-P"/>
    <property type="match status" value="1"/>
</dbReference>
<dbReference type="SMART" id="SM01185">
    <property type="entry name" value="EFP"/>
    <property type="match status" value="1"/>
</dbReference>
<dbReference type="SMART" id="SM00841">
    <property type="entry name" value="Elong-fact-P_C"/>
    <property type="match status" value="1"/>
</dbReference>
<dbReference type="SUPFAM" id="SSF50249">
    <property type="entry name" value="Nucleic acid-binding proteins"/>
    <property type="match status" value="2"/>
</dbReference>
<dbReference type="SUPFAM" id="SSF50104">
    <property type="entry name" value="Translation proteins SH3-like domain"/>
    <property type="match status" value="1"/>
</dbReference>
<organism>
    <name type="scientific">Mycoplasmoides gallisepticum (strain R(low / passage 15 / clone 2))</name>
    <name type="common">Mycoplasma gallisepticum</name>
    <dbReference type="NCBI Taxonomy" id="710127"/>
    <lineage>
        <taxon>Bacteria</taxon>
        <taxon>Bacillati</taxon>
        <taxon>Mycoplasmatota</taxon>
        <taxon>Mycoplasmoidales</taxon>
        <taxon>Mycoplasmoidaceae</taxon>
        <taxon>Mycoplasmoides</taxon>
    </lineage>
</organism>
<evidence type="ECO:0000255" key="1">
    <source>
        <dbReference type="HAMAP-Rule" id="MF_00141"/>
    </source>
</evidence>
<gene>
    <name evidence="1" type="primary">efp</name>
    <name type="ordered locus">MYCGA5110</name>
    <name type="ORF">MGA_0216</name>
</gene>
<feature type="chain" id="PRO_0000094282" description="Elongation factor P">
    <location>
        <begin position="1"/>
        <end position="188"/>
    </location>
</feature>
<name>EFP_MYCGA</name>
<keyword id="KW-0963">Cytoplasm</keyword>
<keyword id="KW-0251">Elongation factor</keyword>
<keyword id="KW-0648">Protein biosynthesis</keyword>
<keyword id="KW-1185">Reference proteome</keyword>
<proteinExistence type="inferred from homology"/>
<sequence length="188" mass="21253">MASIIHAKDLRSGHTFTLDGKIYLVIENSFNKTAMREGIVKCKVKNLRTGSITTEVLTGMKLEQANIEKVKMSFVYQDQNSFVFMNNETYEQIEVPAKLLEYEKNFITENTEALIMRYEDEILGVNLPDQVVIEIDYAEDAVQGNSVNNALKKATLVTGYVIEVPQFIKSKEKVIVSTVDGKYVSRAN</sequence>
<comment type="function">
    <text evidence="1">Involved in peptide bond synthesis. Stimulates efficient translation and peptide-bond synthesis on native or reconstituted 70S ribosomes in vitro. Probably functions indirectly by altering the affinity of the ribosome for aminoacyl-tRNA, thus increasing their reactivity as acceptors for peptidyl transferase.</text>
</comment>
<comment type="pathway">
    <text evidence="1">Protein biosynthesis; polypeptide chain elongation.</text>
</comment>
<comment type="subcellular location">
    <subcellularLocation>
        <location evidence="1">Cytoplasm</location>
    </subcellularLocation>
</comment>
<comment type="similarity">
    <text evidence="1">Belongs to the elongation factor P family.</text>
</comment>
<protein>
    <recommendedName>
        <fullName evidence="1">Elongation factor P</fullName>
        <shortName evidence="1">EF-P</shortName>
    </recommendedName>
</protein>
<accession>Q7NAX4</accession>